<name>MED16_ARATH</name>
<reference key="1">
    <citation type="journal article" date="2009" name="Plant J.">
        <title>Identification of SFR6, a key component in cold acclimation acting post-translationally on CBF function.</title>
        <authorList>
            <person name="Knight H."/>
            <person name="Mugford S.G."/>
            <person name="Ulker B."/>
            <person name="Gao D."/>
            <person name="Thorlby G."/>
            <person name="Knight M.R."/>
        </authorList>
    </citation>
    <scope>NUCLEOTIDE SEQUENCE [GENOMIC DNA / MRNA] (ISOFORM 2)</scope>
    <scope>FUNCTION</scope>
    <scope>INDUCTION</scope>
    <scope>SUBCELLULAR LOCATION</scope>
    <scope>DISRUPTION PHENOTYPE</scope>
</reference>
<reference key="2">
    <citation type="journal article" date="1999" name="Nature">
        <title>Sequence and analysis of chromosome 4 of the plant Arabidopsis thaliana.</title>
        <authorList>
            <person name="Mayer K.F.X."/>
            <person name="Schueller C."/>
            <person name="Wambutt R."/>
            <person name="Murphy G."/>
            <person name="Volckaert G."/>
            <person name="Pohl T."/>
            <person name="Duesterhoeft A."/>
            <person name="Stiekema W."/>
            <person name="Entian K.-D."/>
            <person name="Terryn N."/>
            <person name="Harris B."/>
            <person name="Ansorge W."/>
            <person name="Brandt P."/>
            <person name="Grivell L.A."/>
            <person name="Rieger M."/>
            <person name="Weichselgartner M."/>
            <person name="de Simone V."/>
            <person name="Obermaier B."/>
            <person name="Mache R."/>
            <person name="Mueller M."/>
            <person name="Kreis M."/>
            <person name="Delseny M."/>
            <person name="Puigdomenech P."/>
            <person name="Watson M."/>
            <person name="Schmidtheini T."/>
            <person name="Reichert B."/>
            <person name="Portetelle D."/>
            <person name="Perez-Alonso M."/>
            <person name="Boutry M."/>
            <person name="Bancroft I."/>
            <person name="Vos P."/>
            <person name="Hoheisel J."/>
            <person name="Zimmermann W."/>
            <person name="Wedler H."/>
            <person name="Ridley P."/>
            <person name="Langham S.-A."/>
            <person name="McCullagh B."/>
            <person name="Bilham L."/>
            <person name="Robben J."/>
            <person name="van der Schueren J."/>
            <person name="Grymonprez B."/>
            <person name="Chuang Y.-J."/>
            <person name="Vandenbussche F."/>
            <person name="Braeken M."/>
            <person name="Weltjens I."/>
            <person name="Voet M."/>
            <person name="Bastiaens I."/>
            <person name="Aert R."/>
            <person name="Defoor E."/>
            <person name="Weitzenegger T."/>
            <person name="Bothe G."/>
            <person name="Ramsperger U."/>
            <person name="Hilbert H."/>
            <person name="Braun M."/>
            <person name="Holzer E."/>
            <person name="Brandt A."/>
            <person name="Peters S."/>
            <person name="van Staveren M."/>
            <person name="Dirkse W."/>
            <person name="Mooijman P."/>
            <person name="Klein Lankhorst R."/>
            <person name="Rose M."/>
            <person name="Hauf J."/>
            <person name="Koetter P."/>
            <person name="Berneiser S."/>
            <person name="Hempel S."/>
            <person name="Feldpausch M."/>
            <person name="Lamberth S."/>
            <person name="Van den Daele H."/>
            <person name="De Keyser A."/>
            <person name="Buysshaert C."/>
            <person name="Gielen J."/>
            <person name="Villarroel R."/>
            <person name="De Clercq R."/>
            <person name="van Montagu M."/>
            <person name="Rogers J."/>
            <person name="Cronin A."/>
            <person name="Quail M.A."/>
            <person name="Bray-Allen S."/>
            <person name="Clark L."/>
            <person name="Doggett J."/>
            <person name="Hall S."/>
            <person name="Kay M."/>
            <person name="Lennard N."/>
            <person name="McLay K."/>
            <person name="Mayes R."/>
            <person name="Pettett A."/>
            <person name="Rajandream M.A."/>
            <person name="Lyne M."/>
            <person name="Benes V."/>
            <person name="Rechmann S."/>
            <person name="Borkova D."/>
            <person name="Bloecker H."/>
            <person name="Scharfe M."/>
            <person name="Grimm M."/>
            <person name="Loehnert T.-H."/>
            <person name="Dose S."/>
            <person name="de Haan M."/>
            <person name="Maarse A.C."/>
            <person name="Schaefer M."/>
            <person name="Mueller-Auer S."/>
            <person name="Gabel C."/>
            <person name="Fuchs M."/>
            <person name="Fartmann B."/>
            <person name="Granderath K."/>
            <person name="Dauner D."/>
            <person name="Herzl A."/>
            <person name="Neumann S."/>
            <person name="Argiriou A."/>
            <person name="Vitale D."/>
            <person name="Liguori R."/>
            <person name="Piravandi E."/>
            <person name="Massenet O."/>
            <person name="Quigley F."/>
            <person name="Clabauld G."/>
            <person name="Muendlein A."/>
            <person name="Felber R."/>
            <person name="Schnabl S."/>
            <person name="Hiller R."/>
            <person name="Schmidt W."/>
            <person name="Lecharny A."/>
            <person name="Aubourg S."/>
            <person name="Chefdor F."/>
            <person name="Cooke R."/>
            <person name="Berger C."/>
            <person name="Monfort A."/>
            <person name="Casacuberta E."/>
            <person name="Gibbons T."/>
            <person name="Weber N."/>
            <person name="Vandenbol M."/>
            <person name="Bargues M."/>
            <person name="Terol J."/>
            <person name="Torres A."/>
            <person name="Perez-Perez A."/>
            <person name="Purnelle B."/>
            <person name="Bent E."/>
            <person name="Johnson S."/>
            <person name="Tacon D."/>
            <person name="Jesse T."/>
            <person name="Heijnen L."/>
            <person name="Schwarz S."/>
            <person name="Scholler P."/>
            <person name="Heber S."/>
            <person name="Francs P."/>
            <person name="Bielke C."/>
            <person name="Frishman D."/>
            <person name="Haase D."/>
            <person name="Lemcke K."/>
            <person name="Mewes H.-W."/>
            <person name="Stocker S."/>
            <person name="Zaccaria P."/>
            <person name="Bevan M."/>
            <person name="Wilson R.K."/>
            <person name="de la Bastide M."/>
            <person name="Habermann K."/>
            <person name="Parnell L."/>
            <person name="Dedhia N."/>
            <person name="Gnoj L."/>
            <person name="Schutz K."/>
            <person name="Huang E."/>
            <person name="Spiegel L."/>
            <person name="Sekhon M."/>
            <person name="Murray J."/>
            <person name="Sheet P."/>
            <person name="Cordes M."/>
            <person name="Abu-Threideh J."/>
            <person name="Stoneking T."/>
            <person name="Kalicki J."/>
            <person name="Graves T."/>
            <person name="Harmon G."/>
            <person name="Edwards J."/>
            <person name="Latreille P."/>
            <person name="Courtney L."/>
            <person name="Cloud J."/>
            <person name="Abbott A."/>
            <person name="Scott K."/>
            <person name="Johnson D."/>
            <person name="Minx P."/>
            <person name="Bentley D."/>
            <person name="Fulton B."/>
            <person name="Miller N."/>
            <person name="Greco T."/>
            <person name="Kemp K."/>
            <person name="Kramer J."/>
            <person name="Fulton L."/>
            <person name="Mardis E."/>
            <person name="Dante M."/>
            <person name="Pepin K."/>
            <person name="Hillier L.W."/>
            <person name="Nelson J."/>
            <person name="Spieth J."/>
            <person name="Ryan E."/>
            <person name="Andrews S."/>
            <person name="Geisel C."/>
            <person name="Layman D."/>
            <person name="Du H."/>
            <person name="Ali J."/>
            <person name="Berghoff A."/>
            <person name="Jones K."/>
            <person name="Drone K."/>
            <person name="Cotton M."/>
            <person name="Joshu C."/>
            <person name="Antonoiu B."/>
            <person name="Zidanic M."/>
            <person name="Strong C."/>
            <person name="Sun H."/>
            <person name="Lamar B."/>
            <person name="Yordan C."/>
            <person name="Ma P."/>
            <person name="Zhong J."/>
            <person name="Preston R."/>
            <person name="Vil D."/>
            <person name="Shekher M."/>
            <person name="Matero A."/>
            <person name="Shah R."/>
            <person name="Swaby I.K."/>
            <person name="O'Shaughnessy A."/>
            <person name="Rodriguez M."/>
            <person name="Hoffman J."/>
            <person name="Till S."/>
            <person name="Granat S."/>
            <person name="Shohdy N."/>
            <person name="Hasegawa A."/>
            <person name="Hameed A."/>
            <person name="Lodhi M."/>
            <person name="Johnson A."/>
            <person name="Chen E."/>
            <person name="Marra M.A."/>
            <person name="Martienssen R."/>
            <person name="McCombie W.R."/>
        </authorList>
    </citation>
    <scope>NUCLEOTIDE SEQUENCE [LARGE SCALE GENOMIC DNA]</scope>
    <source>
        <strain>cv. Columbia</strain>
    </source>
</reference>
<reference key="3">
    <citation type="journal article" date="2017" name="Plant J.">
        <title>Araport11: a complete reannotation of the Arabidopsis thaliana reference genome.</title>
        <authorList>
            <person name="Cheng C.Y."/>
            <person name="Krishnakumar V."/>
            <person name="Chan A.P."/>
            <person name="Thibaud-Nissen F."/>
            <person name="Schobel S."/>
            <person name="Town C.D."/>
        </authorList>
    </citation>
    <scope>GENOME REANNOTATION</scope>
    <source>
        <strain>cv. Columbia</strain>
    </source>
</reference>
<reference key="4">
    <citation type="journal article" date="2003" name="Plant J.">
        <title>The sfr6 mutant of Arabidopsis is defective in transcriptional activation via CBF/DREB1 and DREB2 and shows sensitivity to osmotic stress.</title>
        <authorList>
            <person name="Boyce J.M."/>
            <person name="Knight H."/>
            <person name="Deyholos M."/>
            <person name="Openshaw M.R."/>
            <person name="Galbraith D.W."/>
            <person name="Warren G."/>
            <person name="Knight M.R."/>
        </authorList>
    </citation>
    <scope>FUNCTION</scope>
</reference>
<reference key="5">
    <citation type="journal article" date="2007" name="Mol. Cell">
        <title>Purification of a plant mediator from Arabidopsis thaliana identifies PFT1 as the Med25 subunit.</title>
        <authorList>
            <person name="Baeckstroem S."/>
            <person name="Elfving N."/>
            <person name="Nilsson R."/>
            <person name="Wingsle G."/>
            <person name="Bjoerklund S."/>
        </authorList>
    </citation>
    <scope>IDENTIFICATION BY MASS SPECTROMETRY</scope>
    <scope>SUBUNIT</scope>
    <scope>NOMENCLATURE</scope>
</reference>
<reference key="6">
    <citation type="journal article" date="2008" name="Plant Physiol.">
        <title>Sensitive to freezing6 integrates cellular and environmental inputs to the plant circadian clock.</title>
        <authorList>
            <person name="Knight H."/>
            <person name="Thomson A.J."/>
            <person name="McWatters H.G."/>
        </authorList>
    </citation>
    <scope>FUNCTION</scope>
</reference>
<reference key="7">
    <citation type="journal article" date="2011" name="Plant Physiol.">
        <title>The Mediator complex in plants: structure, phylogeny, and expression profiling of representative genes in a dicot (Arabidopsis) and a monocot (rice) during reproduction and abiotic stress.</title>
        <authorList>
            <person name="Mathur S."/>
            <person name="Vyas S."/>
            <person name="Kapoor S."/>
            <person name="Tyagi A.K."/>
        </authorList>
    </citation>
    <scope>IDENTIFICATION</scope>
    <scope>NOMENCLATURE</scope>
</reference>
<reference key="8">
    <citation type="journal article" date="2012" name="New Phytol.">
        <title>The Mediator subunit SFR6/MED16 controls defence gene expression mediated by salicylic acid and jasmonate responsive pathways.</title>
        <authorList>
            <person name="Wathugala D.L."/>
            <person name="Hemsley P.A."/>
            <person name="Moffat C.S."/>
            <person name="Cremelie P."/>
            <person name="Knight M.R."/>
            <person name="Knight H."/>
        </authorList>
    </citation>
    <scope>FUNCTION</scope>
    <source>
        <strain>cv. Columbia</strain>
    </source>
</reference>
<protein>
    <recommendedName>
        <fullName>Mediator of RNA polymerase II transcription subunit 16</fullName>
    </recommendedName>
    <alternativeName>
        <fullName>Protein SENSITIVE TO FREEZING 6</fullName>
    </alternativeName>
</protein>
<comment type="function">
    <text evidence="2 4 5 6">Component of the Mediator complex, a coactivator involved in the regulated transcription of nearly all RNA polymerase II-dependent genes. Mediator functions as a bridge to convey information from gene-specific regulatory proteins to the basal RNA polymerase II transcription machinery. The Mediator complex, having a compact conformation in its free form, is recruited to promoters by direct interactions with regulatory proteins and serves for the assembly of a functional preinitiation complex with RNA polymerase II and the general transcription factors. Involved in the regulation of the circadian clock, in the control of flowering time, in freezing- and osmotic-stress tolerance and in both salicylic acid- and jasmonate-mediated defense gene expression.</text>
</comment>
<comment type="subunit">
    <text evidence="3">Component of the Mediator complex.</text>
</comment>
<comment type="subcellular location">
    <subcellularLocation>
        <location evidence="5">Nucleus</location>
    </subcellularLocation>
</comment>
<comment type="alternative products">
    <event type="alternative splicing"/>
    <isoform>
        <id>F4JGZ1-1</id>
        <name>1</name>
        <sequence type="displayed"/>
    </isoform>
    <isoform>
        <id>F4JGZ1-2</id>
        <name>2</name>
        <sequence type="described" ref="VSP_044033"/>
    </isoform>
</comment>
<comment type="induction">
    <text evidence="5">Not up- or down-regulated by cold.</text>
</comment>
<comment type="disruption phenotype">
    <text evidence="5">Late flowering in long days. Very low expression of cold-responsive (COR) genes.</text>
</comment>
<comment type="similarity">
    <text evidence="8">Belongs to the plant Mediator complex subunit 16 family.</text>
</comment>
<comment type="sequence caution" evidence="8">
    <conflict type="erroneous gene model prediction">
        <sequence resource="EMBL-CDS" id="CAB81034"/>
    </conflict>
</comment>
<dbReference type="EMBL" id="AL161502">
    <property type="protein sequence ID" value="CAB81034.1"/>
    <property type="status" value="ALT_SEQ"/>
    <property type="molecule type" value="Genomic_DNA"/>
</dbReference>
<dbReference type="EMBL" id="CP002687">
    <property type="protein sequence ID" value="AEE82441.1"/>
    <property type="molecule type" value="Genomic_DNA"/>
</dbReference>
<dbReference type="EMBL" id="CP002687">
    <property type="protein sequence ID" value="AEE82442.1"/>
    <property type="molecule type" value="Genomic_DNA"/>
</dbReference>
<dbReference type="PIR" id="H85061">
    <property type="entry name" value="H85061"/>
</dbReference>
<dbReference type="RefSeq" id="NP_001190676.1">
    <molecule id="F4JGZ1-2"/>
    <property type="nucleotide sequence ID" value="NM_001203747.1"/>
</dbReference>
<dbReference type="RefSeq" id="NP_192401.5">
    <molecule id="F4JGZ1-1"/>
    <property type="nucleotide sequence ID" value="NM_116730.5"/>
</dbReference>
<dbReference type="BioGRID" id="11142">
    <property type="interactions" value="22"/>
</dbReference>
<dbReference type="FunCoup" id="F4JGZ1">
    <property type="interactions" value="1471"/>
</dbReference>
<dbReference type="STRING" id="3702.F4JGZ1"/>
<dbReference type="GlyGen" id="F4JGZ1">
    <property type="glycosylation" value="1 site"/>
</dbReference>
<dbReference type="iPTMnet" id="F4JGZ1"/>
<dbReference type="PaxDb" id="3702-AT4G04920.1"/>
<dbReference type="ProteomicsDB" id="250842">
    <molecule id="F4JGZ1-1"/>
</dbReference>
<dbReference type="EnsemblPlants" id="AT4G04920.1">
    <molecule id="F4JGZ1-1"/>
    <property type="protein sequence ID" value="AT4G04920.1"/>
    <property type="gene ID" value="AT4G04920"/>
</dbReference>
<dbReference type="EnsemblPlants" id="AT4G04920.2">
    <molecule id="F4JGZ1-2"/>
    <property type="protein sequence ID" value="AT4G04920.2"/>
    <property type="gene ID" value="AT4G04920"/>
</dbReference>
<dbReference type="GeneID" id="825831"/>
<dbReference type="Gramene" id="AT4G04920.1">
    <molecule id="F4JGZ1-1"/>
    <property type="protein sequence ID" value="AT4G04920.1"/>
    <property type="gene ID" value="AT4G04920"/>
</dbReference>
<dbReference type="Gramene" id="AT4G04920.2">
    <molecule id="F4JGZ1-2"/>
    <property type="protein sequence ID" value="AT4G04920.2"/>
    <property type="gene ID" value="AT4G04920"/>
</dbReference>
<dbReference type="KEGG" id="ath:AT4G04920"/>
<dbReference type="Araport" id="AT4G04920"/>
<dbReference type="TAIR" id="AT4G04920">
    <property type="gene designation" value="SFR6"/>
</dbReference>
<dbReference type="eggNOG" id="ENOG502QU1U">
    <property type="taxonomic scope" value="Eukaryota"/>
</dbReference>
<dbReference type="InParanoid" id="F4JGZ1"/>
<dbReference type="PRO" id="PR:F4JGZ1"/>
<dbReference type="Proteomes" id="UP000006548">
    <property type="component" value="Chromosome 4"/>
</dbReference>
<dbReference type="ExpressionAtlas" id="F4JGZ1">
    <property type="expression patterns" value="baseline and differential"/>
</dbReference>
<dbReference type="GO" id="GO:0016592">
    <property type="term" value="C:mediator complex"/>
    <property type="evidence" value="ECO:0000314"/>
    <property type="project" value="UniProtKB"/>
</dbReference>
<dbReference type="GO" id="GO:0005634">
    <property type="term" value="C:nucleus"/>
    <property type="evidence" value="ECO:0000314"/>
    <property type="project" value="TAIR"/>
</dbReference>
<dbReference type="GO" id="GO:0003712">
    <property type="term" value="F:transcription coregulator activity"/>
    <property type="evidence" value="ECO:0000314"/>
    <property type="project" value="TAIR"/>
</dbReference>
<dbReference type="GO" id="GO:0009738">
    <property type="term" value="P:abscisic acid-activated signaling pathway"/>
    <property type="evidence" value="ECO:0000314"/>
    <property type="project" value="TAIR"/>
</dbReference>
<dbReference type="GO" id="GO:0009734">
    <property type="term" value="P:auxin-activated signaling pathway"/>
    <property type="evidence" value="ECO:0000315"/>
    <property type="project" value="TAIR"/>
</dbReference>
<dbReference type="GO" id="GO:0032922">
    <property type="term" value="P:circadian regulation of gene expression"/>
    <property type="evidence" value="ECO:0000315"/>
    <property type="project" value="TAIR"/>
</dbReference>
<dbReference type="GO" id="GO:2001011">
    <property type="term" value="P:positive regulation of plant-type cell wall cellulose biosynthetic process"/>
    <property type="evidence" value="ECO:0000315"/>
    <property type="project" value="TAIR"/>
</dbReference>
<dbReference type="GO" id="GO:1901672">
    <property type="term" value="P:positive regulation of systemic acquired resistance"/>
    <property type="evidence" value="ECO:0000315"/>
    <property type="project" value="TAIR"/>
</dbReference>
<dbReference type="GO" id="GO:0045944">
    <property type="term" value="P:positive regulation of transcription by RNA polymerase II"/>
    <property type="evidence" value="ECO:0000314"/>
    <property type="project" value="TAIR"/>
</dbReference>
<dbReference type="GO" id="GO:1902066">
    <property type="term" value="P:regulation of cell wall pectin metabolic process"/>
    <property type="evidence" value="ECO:0000316"/>
    <property type="project" value="TAIR"/>
</dbReference>
<dbReference type="GO" id="GO:0006355">
    <property type="term" value="P:regulation of DNA-templated transcription"/>
    <property type="evidence" value="ECO:0000315"/>
    <property type="project" value="TAIR"/>
</dbReference>
<dbReference type="GO" id="GO:0010104">
    <property type="term" value="P:regulation of ethylene-activated signaling pathway"/>
    <property type="evidence" value="ECO:0000315"/>
    <property type="project" value="TAIR"/>
</dbReference>
<dbReference type="GO" id="GO:2000022">
    <property type="term" value="P:regulation of jasmonic acid mediated signaling pathway"/>
    <property type="evidence" value="ECO:0000315"/>
    <property type="project" value="TAIR"/>
</dbReference>
<dbReference type="GO" id="GO:0048586">
    <property type="term" value="P:regulation of long-day photoperiodism, flowering"/>
    <property type="evidence" value="ECO:0000315"/>
    <property type="project" value="TAIR"/>
</dbReference>
<dbReference type="GO" id="GO:2001009">
    <property type="term" value="P:regulation of plant-type cell wall cellulose biosynthetic process"/>
    <property type="evidence" value="ECO:0000316"/>
    <property type="project" value="TAIR"/>
</dbReference>
<dbReference type="GO" id="GO:0006970">
    <property type="term" value="P:response to osmotic stress"/>
    <property type="evidence" value="ECO:0000315"/>
    <property type="project" value="TAIR"/>
</dbReference>
<dbReference type="GO" id="GO:0048364">
    <property type="term" value="P:root development"/>
    <property type="evidence" value="ECO:0000316"/>
    <property type="project" value="TAIR"/>
</dbReference>
<dbReference type="GO" id="GO:0010091">
    <property type="term" value="P:trichome branching"/>
    <property type="evidence" value="ECO:0000315"/>
    <property type="project" value="TAIR"/>
</dbReference>
<dbReference type="GO" id="GO:1905499">
    <property type="term" value="P:trichome papilla formation"/>
    <property type="evidence" value="ECO:0000315"/>
    <property type="project" value="TAIR"/>
</dbReference>
<dbReference type="InterPro" id="IPR038836">
    <property type="entry name" value="MED16"/>
</dbReference>
<dbReference type="PANTHER" id="PTHR35130">
    <property type="entry name" value="MEDIATOR OF RNA POLYMERASE II TRANSCRIPTION SUBUNIT 16"/>
    <property type="match status" value="1"/>
</dbReference>
<dbReference type="PANTHER" id="PTHR35130:SF1">
    <property type="entry name" value="MEDIATOR OF RNA POLYMERASE II TRANSCRIPTION SUBUNIT 16"/>
    <property type="match status" value="1"/>
</dbReference>
<accession>F4JGZ1</accession>
<accession>F4JGZ2</accession>
<accession>Q9M0Y7</accession>
<feature type="chain" id="PRO_0000418351" description="Mediator of RNA polymerase II transcription subunit 16">
    <location>
        <begin position="1"/>
        <end position="1278"/>
    </location>
</feature>
<feature type="region of interest" description="Disordered" evidence="1">
    <location>
        <begin position="1"/>
        <end position="21"/>
    </location>
</feature>
<feature type="region of interest" description="Disordered" evidence="1">
    <location>
        <begin position="530"/>
        <end position="557"/>
    </location>
</feature>
<feature type="region of interest" description="Disordered" evidence="1">
    <location>
        <begin position="839"/>
        <end position="861"/>
    </location>
</feature>
<feature type="compositionally biased region" description="Acidic residues" evidence="1">
    <location>
        <begin position="1"/>
        <end position="10"/>
    </location>
</feature>
<feature type="compositionally biased region" description="Basic and acidic residues" evidence="1">
    <location>
        <begin position="547"/>
        <end position="557"/>
    </location>
</feature>
<feature type="compositionally biased region" description="Polar residues" evidence="1">
    <location>
        <begin position="841"/>
        <end position="861"/>
    </location>
</feature>
<feature type="splice variant" id="VSP_044033" description="In isoform 2." evidence="7">
    <location>
        <begin position="864"/>
        <end position="874"/>
    </location>
</feature>
<gene>
    <name type="primary">MED16</name>
    <name type="synonym">MED16_1</name>
    <name type="synonym">SFR6</name>
    <name type="ordered locus">At4g04920</name>
    <name type="ORF">T1J1.2</name>
</gene>
<sequence>MNQQNPEEEVSLVNNSGGGGIIEAPAIVEEKEEEGLQQKQEETIESTDPILVVVEEKLLEKSVDGEKEDDNSSSSNMEIDPVSPATVFCVKLKQPNSNLLHKMSVPELCRNFSAVAWCGKLNAIACASETCARIPSSKANTPFWIPIHILIPERPTECAVFNVVADSPRDSVQFIEWSPTSCPRALLIANFHGRITIWTQPTQGSANLVHDATSWQCEHEWRQDIAVVTKWLTGASPYRWLSSKPSSGTNAKSTFEEKFLSQSSESSARWPNFLCVCSVFSSGSVQIHWSQWPSNQGSTAPKWFSTKKGLLGAGPSGIMAADAIITDSGAMHVAGVPIVNPSTIVVWEVTPGPGNGLQATPKISTGSRVPPSLSSSSWTGFAPLAAYLFSWQEYLISEIKQGKKPSDQDSSDAISLSCSPVSNFSAYVSPEAAAQSAATTTWGSGVTAVAFDPTRGGSVIAVVIVEGQYMSPYDPDEGPSITGWRVQRWESSVQPVVLHQIFGNPTSNFGGQVPTQTVWVSRVDMSIPPTKDFKNHQVAAAGPSVDAPKEPDSGDEKANKVVFDPFDLPSDIRTLARIVYSAHGGEIAIAFLRGGVHIFSGPTFSPVENYQINVGSAIAAPAFSPTSCCSASVWHDAAKDCAMLKIIRVLPPALPRNQSKVDQSTWERAIAERFWWSLLVGVDWWDAVGCTQSAAEDGIVSLNSVIAVMDADFHSLPSTQHRQQYGPNLDRIKCRLLEGTNAQEVRAMVLDMQARLLLDMLGKGIESALVNPSALVFEPWRVDGETITGINPEAMAVDPALVSSIQAYVDAVLDLASHFITRLRRYASFCRTLASHAASAGTGSNRNNVTSPTQNASSPATPQVFPDKSLYLAVGQPTTTTTTTATTNSSGSSHVQAWMQGAIAKISSSNDGSNSTASPISGSPTFMPISINTGTFPGTPAVRLIGDCHFLHRLCQLLLFCFLQRSSRFPQRNADVSSQKLQTGATSKLEEVNSAKPTPALNRIEDAQGFRGAQLGTGVKGIDENSARTTKMGSGNAGQGYTYEEVRVLFHILMDLCKRTSGLAHPLPGSQVGSGNIQVRLHYIDGNYTVLPEVVEAALGPHMQNMPRPRGADAAGLLLRELELHPPSEEWHRRNLFGGPGSEPEDMILTDDVSKLSNSLDLPDTNFSGICDGYNRVHSLWPRKRRMSERDAAFGSNTSVGLGAYLGIMGSRRDVVTATWKTGLEGVWYKCIRCLRQTSAFASPGATKQPNPNERETWWTSRWVYCCPMCGGTWVRVV</sequence>
<evidence type="ECO:0000256" key="1">
    <source>
        <dbReference type="SAM" id="MobiDB-lite"/>
    </source>
</evidence>
<evidence type="ECO:0000269" key="2">
    <source>
    </source>
</evidence>
<evidence type="ECO:0000269" key="3">
    <source>
    </source>
</evidence>
<evidence type="ECO:0000269" key="4">
    <source>
    </source>
</evidence>
<evidence type="ECO:0000269" key="5">
    <source>
    </source>
</evidence>
<evidence type="ECO:0000269" key="6">
    <source>
    </source>
</evidence>
<evidence type="ECO:0000303" key="7">
    <source>
    </source>
</evidence>
<evidence type="ECO:0000305" key="8"/>
<proteinExistence type="evidence at protein level"/>
<organism>
    <name type="scientific">Arabidopsis thaliana</name>
    <name type="common">Mouse-ear cress</name>
    <dbReference type="NCBI Taxonomy" id="3702"/>
    <lineage>
        <taxon>Eukaryota</taxon>
        <taxon>Viridiplantae</taxon>
        <taxon>Streptophyta</taxon>
        <taxon>Embryophyta</taxon>
        <taxon>Tracheophyta</taxon>
        <taxon>Spermatophyta</taxon>
        <taxon>Magnoliopsida</taxon>
        <taxon>eudicotyledons</taxon>
        <taxon>Gunneridae</taxon>
        <taxon>Pentapetalae</taxon>
        <taxon>rosids</taxon>
        <taxon>malvids</taxon>
        <taxon>Brassicales</taxon>
        <taxon>Brassicaceae</taxon>
        <taxon>Camelineae</taxon>
        <taxon>Arabidopsis</taxon>
    </lineage>
</organism>
<keyword id="KW-0025">Alternative splicing</keyword>
<keyword id="KW-1184">Jasmonic acid signaling pathway</keyword>
<keyword id="KW-0539">Nucleus</keyword>
<keyword id="KW-1185">Reference proteome</keyword>
<keyword id="KW-0804">Transcription</keyword>
<keyword id="KW-0805">Transcription regulation</keyword>